<accession>C0ZT86</accession>
<sequence>MARAVGIDLGTTNSVVAVLEGGEPVVVANAEGSRTTPSVVAFAKNGEVLVGQPAKNQAVTNVDRTLRSVKRHIGTDWNVEIDGKKYTPQEISARTLMKLKRDAEAYLGEDITDAVITVPAYFEDAQRQATKEAGQIAGLNVLRIVNEPTAAALAYGLDKGDTEQTILVFDLGGGTFDVSLLEIGDGVVEVRATSGDNHLGGDDWDERVVAWLVDKFKAQNGIDLTKDKMALQRLREAAEKAKIELSSSQSTSINLPYITVDADKNPLFLDEQLSRSEFQKITSDLLDRTRAPFQAVIKDSGIAVKDIDHVVLVGGSTRMPAVSDLVRELTGGREPNKGVNPDEVVAVGAALQAGVLKGEVKDVLLLDVTPLSLGIETKGGVMTKLIERNTTIPTKRSETFTTADDNQPSVQIQVFQGEREIASHNKLLGSFELTDLPPAPRGVPQIEVTFDIDANGIVHVTAKDKGTGKENTIKIQDGSGLSKEEIERMVKDAEAHAEEDKARREEAEVRNQAESLVHQTEKFVKEQREGENAGKVSEEILTKVEAAVKDVNDALAGTDIAAVKTAVEKLGTESQALGQAIYEASAANEAGNTDGAGNDDDVVDAEVVDEPTDSDKK</sequence>
<feature type="chain" id="PRO_1000205195" description="Chaperone protein DnaK">
    <location>
        <begin position="1"/>
        <end position="617"/>
    </location>
</feature>
<feature type="region of interest" description="Disordered" evidence="2">
    <location>
        <begin position="588"/>
        <end position="617"/>
    </location>
</feature>
<feature type="compositionally biased region" description="Acidic residues" evidence="2">
    <location>
        <begin position="597"/>
        <end position="617"/>
    </location>
</feature>
<feature type="modified residue" description="Phosphothreonine; by autocatalysis" evidence="1">
    <location>
        <position position="175"/>
    </location>
</feature>
<reference key="1">
    <citation type="submission" date="2005-03" db="EMBL/GenBank/DDBJ databases">
        <title>Comparison of the complete genome sequences of Rhodococcus erythropolis PR4 and Rhodococcus opacus B4.</title>
        <authorList>
            <person name="Takarada H."/>
            <person name="Sekine M."/>
            <person name="Hosoyama A."/>
            <person name="Yamada R."/>
            <person name="Fujisawa T."/>
            <person name="Omata S."/>
            <person name="Shimizu A."/>
            <person name="Tsukatani N."/>
            <person name="Tanikawa S."/>
            <person name="Fujita N."/>
            <person name="Harayama S."/>
        </authorList>
    </citation>
    <scope>NUCLEOTIDE SEQUENCE [LARGE SCALE GENOMIC DNA]</scope>
    <source>
        <strain>PR4 / NBRC 100887</strain>
    </source>
</reference>
<organism>
    <name type="scientific">Rhodococcus erythropolis (strain PR4 / NBRC 100887)</name>
    <dbReference type="NCBI Taxonomy" id="234621"/>
    <lineage>
        <taxon>Bacteria</taxon>
        <taxon>Bacillati</taxon>
        <taxon>Actinomycetota</taxon>
        <taxon>Actinomycetes</taxon>
        <taxon>Mycobacteriales</taxon>
        <taxon>Nocardiaceae</taxon>
        <taxon>Rhodococcus</taxon>
        <taxon>Rhodococcus erythropolis group</taxon>
    </lineage>
</organism>
<dbReference type="EMBL" id="AP008957">
    <property type="protein sequence ID" value="BAH32059.1"/>
    <property type="molecule type" value="Genomic_DNA"/>
</dbReference>
<dbReference type="RefSeq" id="WP_019749384.1">
    <property type="nucleotide sequence ID" value="NC_012490.1"/>
</dbReference>
<dbReference type="SMR" id="C0ZT86"/>
<dbReference type="GeneID" id="57488508"/>
<dbReference type="KEGG" id="rer:RER_13510"/>
<dbReference type="eggNOG" id="COG0443">
    <property type="taxonomic scope" value="Bacteria"/>
</dbReference>
<dbReference type="HOGENOM" id="CLU_005965_2_4_11"/>
<dbReference type="Proteomes" id="UP000002204">
    <property type="component" value="Chromosome"/>
</dbReference>
<dbReference type="GO" id="GO:0005524">
    <property type="term" value="F:ATP binding"/>
    <property type="evidence" value="ECO:0007669"/>
    <property type="project" value="UniProtKB-UniRule"/>
</dbReference>
<dbReference type="GO" id="GO:0140662">
    <property type="term" value="F:ATP-dependent protein folding chaperone"/>
    <property type="evidence" value="ECO:0007669"/>
    <property type="project" value="InterPro"/>
</dbReference>
<dbReference type="GO" id="GO:0051082">
    <property type="term" value="F:unfolded protein binding"/>
    <property type="evidence" value="ECO:0007669"/>
    <property type="project" value="InterPro"/>
</dbReference>
<dbReference type="CDD" id="cd10234">
    <property type="entry name" value="ASKHA_NBD_HSP70_DnaK-like"/>
    <property type="match status" value="1"/>
</dbReference>
<dbReference type="FunFam" id="2.60.34.10:FF:000014">
    <property type="entry name" value="Chaperone protein DnaK HSP70"/>
    <property type="match status" value="1"/>
</dbReference>
<dbReference type="FunFam" id="1.20.1270.10:FF:000001">
    <property type="entry name" value="Molecular chaperone DnaK"/>
    <property type="match status" value="1"/>
</dbReference>
<dbReference type="FunFam" id="3.30.420.40:FF:000071">
    <property type="entry name" value="Molecular chaperone DnaK"/>
    <property type="match status" value="1"/>
</dbReference>
<dbReference type="FunFam" id="3.90.640.10:FF:000003">
    <property type="entry name" value="Molecular chaperone DnaK"/>
    <property type="match status" value="1"/>
</dbReference>
<dbReference type="Gene3D" id="1.20.1270.10">
    <property type="match status" value="1"/>
</dbReference>
<dbReference type="Gene3D" id="3.30.30.30">
    <property type="match status" value="1"/>
</dbReference>
<dbReference type="Gene3D" id="3.30.420.40">
    <property type="match status" value="3"/>
</dbReference>
<dbReference type="Gene3D" id="3.90.640.10">
    <property type="entry name" value="Actin, Chain A, domain 4"/>
    <property type="match status" value="1"/>
</dbReference>
<dbReference type="Gene3D" id="2.60.34.10">
    <property type="entry name" value="Substrate Binding Domain Of DNAk, Chain A, domain 1"/>
    <property type="match status" value="1"/>
</dbReference>
<dbReference type="HAMAP" id="MF_00332">
    <property type="entry name" value="DnaK"/>
    <property type="match status" value="1"/>
</dbReference>
<dbReference type="InterPro" id="IPR043129">
    <property type="entry name" value="ATPase_NBD"/>
</dbReference>
<dbReference type="InterPro" id="IPR012725">
    <property type="entry name" value="Chaperone_DnaK"/>
</dbReference>
<dbReference type="InterPro" id="IPR018181">
    <property type="entry name" value="Heat_shock_70_CS"/>
</dbReference>
<dbReference type="InterPro" id="IPR029048">
    <property type="entry name" value="HSP70_C_sf"/>
</dbReference>
<dbReference type="InterPro" id="IPR029047">
    <property type="entry name" value="HSP70_peptide-bd_sf"/>
</dbReference>
<dbReference type="InterPro" id="IPR013126">
    <property type="entry name" value="Hsp_70_fam"/>
</dbReference>
<dbReference type="NCBIfam" id="NF001413">
    <property type="entry name" value="PRK00290.1"/>
    <property type="match status" value="1"/>
</dbReference>
<dbReference type="NCBIfam" id="TIGR02350">
    <property type="entry name" value="prok_dnaK"/>
    <property type="match status" value="1"/>
</dbReference>
<dbReference type="PANTHER" id="PTHR19375">
    <property type="entry name" value="HEAT SHOCK PROTEIN 70KDA"/>
    <property type="match status" value="1"/>
</dbReference>
<dbReference type="Pfam" id="PF00012">
    <property type="entry name" value="HSP70"/>
    <property type="match status" value="1"/>
</dbReference>
<dbReference type="PRINTS" id="PR00301">
    <property type="entry name" value="HEATSHOCK70"/>
</dbReference>
<dbReference type="SUPFAM" id="SSF53067">
    <property type="entry name" value="Actin-like ATPase domain"/>
    <property type="match status" value="2"/>
</dbReference>
<dbReference type="SUPFAM" id="SSF100934">
    <property type="entry name" value="Heat shock protein 70kD (HSP70), C-terminal subdomain"/>
    <property type="match status" value="1"/>
</dbReference>
<dbReference type="SUPFAM" id="SSF100920">
    <property type="entry name" value="Heat shock protein 70kD (HSP70), peptide-binding domain"/>
    <property type="match status" value="1"/>
</dbReference>
<dbReference type="PROSITE" id="PS00297">
    <property type="entry name" value="HSP70_1"/>
    <property type="match status" value="1"/>
</dbReference>
<dbReference type="PROSITE" id="PS00329">
    <property type="entry name" value="HSP70_2"/>
    <property type="match status" value="1"/>
</dbReference>
<dbReference type="PROSITE" id="PS01036">
    <property type="entry name" value="HSP70_3"/>
    <property type="match status" value="1"/>
</dbReference>
<keyword id="KW-0067">ATP-binding</keyword>
<keyword id="KW-0143">Chaperone</keyword>
<keyword id="KW-0547">Nucleotide-binding</keyword>
<keyword id="KW-0597">Phosphoprotein</keyword>
<keyword id="KW-0346">Stress response</keyword>
<protein>
    <recommendedName>
        <fullName evidence="1">Chaperone protein DnaK</fullName>
    </recommendedName>
    <alternativeName>
        <fullName evidence="1">HSP70</fullName>
    </alternativeName>
    <alternativeName>
        <fullName evidence="1">Heat shock 70 kDa protein</fullName>
    </alternativeName>
    <alternativeName>
        <fullName evidence="1">Heat shock protein 70</fullName>
    </alternativeName>
</protein>
<gene>
    <name evidence="1" type="primary">dnaK</name>
    <name type="ordered locus">RER_13510</name>
</gene>
<evidence type="ECO:0000255" key="1">
    <source>
        <dbReference type="HAMAP-Rule" id="MF_00332"/>
    </source>
</evidence>
<evidence type="ECO:0000256" key="2">
    <source>
        <dbReference type="SAM" id="MobiDB-lite"/>
    </source>
</evidence>
<proteinExistence type="inferred from homology"/>
<comment type="function">
    <text evidence="1">Acts as a chaperone.</text>
</comment>
<comment type="induction">
    <text evidence="1">By stress conditions e.g. heat shock.</text>
</comment>
<comment type="similarity">
    <text evidence="1">Belongs to the heat shock protein 70 family.</text>
</comment>
<name>DNAK_RHOE4</name>